<proteinExistence type="evidence at protein level"/>
<protein>
    <recommendedName>
        <fullName evidence="7">Histone H3</fullName>
    </recommendedName>
</protein>
<keyword id="KW-0007">Acetylation</keyword>
<keyword id="KW-0158">Chromosome</keyword>
<keyword id="KW-0903">Direct protein sequencing</keyword>
<keyword id="KW-0238">DNA-binding</keyword>
<keyword id="KW-0488">Methylation</keyword>
<keyword id="KW-0544">Nucleosome core</keyword>
<keyword id="KW-0539">Nucleus</keyword>
<keyword id="KW-0597">Phosphoprotein</keyword>
<comment type="function">
    <text evidence="8">Core component of nucleosome. Nucleosomes wrap and compact DNA into chromatin, limiting DNA accessibility to the cellular machineries which require DNA as a template. Histones thereby play a central role in transcription regulation, DNA repair, DNA replication and chromosomal stability. DNA accessibility is regulated via a complex set of post-translational modifications of histones, also called histone code, and nucleosome remodeling.</text>
</comment>
<comment type="pathway">
    <text evidence="7">Alkaloid biosynthesis.</text>
</comment>
<comment type="subunit">
    <text evidence="1">The nucleosome is a histone octamer containing two molecules each of H2A, H2B, H3 and H4 assembled in one H3-H4 heterotetramer and two H2A-H2B heterodimers. The octamer wraps approximately 147 bp of DNA.</text>
</comment>
<comment type="subcellular location">
    <subcellularLocation>
        <location evidence="1 3">Nucleus</location>
    </subcellularLocation>
    <subcellularLocation>
        <location evidence="1">Chromosome</location>
    </subcellularLocation>
    <subcellularLocation>
        <location evidence="1">Nucleus</location>
        <location evidence="1">Nucleolus</location>
    </subcellularLocation>
    <text evidence="1">Localized at rDNA loci in the nucleolus.</text>
</comment>
<comment type="tissue specificity">
    <text evidence="5">Expressed ubiquitously.</text>
</comment>
<comment type="PTM">
    <text evidence="1">Acetylation is generally linked to gene activation. Can be acetylated to form H3K9ac, H3K14ac, H3K18ac and H3K23ac. H3K9ac could compete with H3K9me and prevent gene silencing. H3K9ac is restricted to euchromatin (By similarity).</text>
</comment>
<comment type="PTM">
    <text evidence="1">Methylated to form mainly H3K4me, H3K9me, H3K18me, H3K23me, H3K27me and H3K36me. H3K4me1/2/3, H3K9me3, H3K27me3 and H3K36me1/2/3 are typical marks for euchromatin, whereas heterochromatic chromocenters are enriched in H3K9me1/2 and H3K27me1/2. H2BK143ub1 is probably prerequisite for H3K4me (By similarity).</text>
</comment>
<comment type="PTM">
    <text evidence="1">Can be phosphorylated to form H3S10ph, H3T11ph and H3S28ph.</text>
</comment>
<comment type="similarity">
    <text evidence="8">Belongs to the histone H3 family.</text>
</comment>
<comment type="caution">
    <text evidence="8">To ensure consistency between histone entries, we follow the 'Brno' nomenclature for histone modifications, with positions referring to those used in the literature for the 'closest' model organism. Due to slight variations in histone sequences between organisms and to the presence of initiator methionine in UniProtKB/Swiss-Prot sequences, the actual positions of modified amino acids in the sequence generally differ. In this entry the following conventions are used: H3K4me = methylated Lys-5; H3K9ac = acetylated Lys-10; H3K9me = methylated Lys-10; H3S10ph = phosphorylated Ser-11; H3T11ph = phosphorylated Thr-12; H3K14ac = acetylated Lys-15; H3K18ac = acetylated Lys-19; H3K18me = methylated Lys-19; H3K23ac = acetylated Lys-24; H3K23me = methylated Lys-24; H3K27me = methylated Lys-28; H3S28ph = phosphorylated Ser-29; H3K36me = methylated Lys-37.</text>
</comment>
<reference key="1">
    <citation type="journal article" date="2017" name="Sci. Rep.">
        <title>Transcriptome and metabolome profiling of Narcissus pseudonarcissus 'King Alfred' reveal components of Amaryllidaceae alkaloid metabolism.</title>
        <authorList>
            <person name="Singh A."/>
            <person name="Desgagne-Penix I."/>
        </authorList>
    </citation>
    <scope>NUCLEOTIDE SEQUENCE [MRNA]</scope>
    <scope>REVIEW ON THE AMARYLLIDACEAE ALKALOID METABOLISM</scope>
    <scope>PATHWAY</scope>
    <scope>TISSUE SPECIFICITY</scope>
    <scope>GENE FAMILY</scope>
    <scope>NOMENCLATURE</scope>
    <source>
        <strain>cv. King Alfred</strain>
        <tissue>Bulb</tissue>
    </source>
</reference>
<reference key="2">
    <citation type="submission" date="1996-02" db="UniProtKB">
        <authorList>
            <person name="Partis M.D."/>
            <person name="Barker P."/>
            <person name="Thomas B."/>
        </authorList>
    </citation>
    <scope>PROTEIN SEQUENCE OF 2-20</scope>
    <source>
        <strain>cv. Golden Harvest</strain>
        <tissue>Bulb</tissue>
    </source>
</reference>
<sequence>MARTKQTARKSTGGKAPRKQLATKAARKSAPTTGGVKKPHRYRPGTVALREIRKYQKSTELLIRKLPFQRLVREIAQDFKTDLRFQSHAVLALQEAAEAYLVGLFEDTNLCAIHAKRVTIMPKDIQLARRIRGERA</sequence>
<evidence type="ECO:0000250" key="1">
    <source>
        <dbReference type="UniProtKB" id="P59169"/>
    </source>
</evidence>
<evidence type="ECO:0000250" key="2">
    <source>
        <dbReference type="UniProtKB" id="P59226"/>
    </source>
</evidence>
<evidence type="ECO:0000255" key="3">
    <source>
        <dbReference type="PROSITE-ProRule" id="PRU00768"/>
    </source>
</evidence>
<evidence type="ECO:0000256" key="4">
    <source>
        <dbReference type="SAM" id="MobiDB-lite"/>
    </source>
</evidence>
<evidence type="ECO:0000269" key="5">
    <source>
    </source>
</evidence>
<evidence type="ECO:0000269" key="6">
    <source ref="2"/>
</evidence>
<evidence type="ECO:0000303" key="7">
    <source>
    </source>
</evidence>
<evidence type="ECO:0000305" key="8"/>
<name>H3_NARPS</name>
<feature type="initiator methionine" description="Removed" evidence="6">
    <location>
        <position position="1"/>
    </location>
</feature>
<feature type="chain" id="PRO_0000221286" description="Histone H3">
    <location>
        <begin position="2"/>
        <end position="136"/>
    </location>
</feature>
<feature type="region of interest" description="Disordered" evidence="4">
    <location>
        <begin position="1"/>
        <end position="43"/>
    </location>
</feature>
<feature type="short sequence motif" description="Nuclear localization signal 1" evidence="3">
    <location>
        <begin position="26"/>
        <end position="33"/>
    </location>
</feature>
<feature type="short sequence motif" description="Nuclear localization signal 2" evidence="3">
    <location>
        <begin position="115"/>
        <end position="122"/>
    </location>
</feature>
<feature type="site" description="Not N6-methylated" evidence="1">
    <location>
        <position position="15"/>
    </location>
</feature>
<feature type="site" description="Not N6-acetylated" evidence="1">
    <location>
        <position position="28"/>
    </location>
</feature>
<feature type="site" description="Impaired recognition by ATXR5 and ATXR6" evidence="1">
    <location>
        <position position="32"/>
    </location>
</feature>
<feature type="site" description="Not N6-acetylated" evidence="1">
    <location>
        <position position="37"/>
    </location>
</feature>
<feature type="modified residue" description="N6,N6,N6-trimethyllysine; alternate" evidence="1">
    <location>
        <position position="5"/>
    </location>
</feature>
<feature type="modified residue" description="N6,N6-dimethyllysine; alternate" evidence="1">
    <location>
        <position position="5"/>
    </location>
</feature>
<feature type="modified residue" description="N6-methyllysine; alternate" evidence="1">
    <location>
        <position position="5"/>
    </location>
</feature>
<feature type="modified residue" description="N6,N6,N6-trimethyllysine; alternate" evidence="1">
    <location>
        <position position="10"/>
    </location>
</feature>
<feature type="modified residue" description="N6,N6-dimethyllysine; alternate" evidence="1">
    <location>
        <position position="10"/>
    </location>
</feature>
<feature type="modified residue" description="N6-acetyllysine; alternate" evidence="1">
    <location>
        <position position="10"/>
    </location>
</feature>
<feature type="modified residue" description="N6-methyllysine; alternate" evidence="1">
    <location>
        <position position="10"/>
    </location>
</feature>
<feature type="modified residue" description="Phosphoserine" evidence="1">
    <location>
        <position position="11"/>
    </location>
</feature>
<feature type="modified residue" description="Phosphothreonine" evidence="1">
    <location>
        <position position="12"/>
    </location>
</feature>
<feature type="modified residue" description="N6-acetyllysine" evidence="1">
    <location>
        <position position="15"/>
    </location>
</feature>
<feature type="modified residue" description="N6-acetyllysine; alternate" evidence="1">
    <location>
        <position position="19"/>
    </location>
</feature>
<feature type="modified residue" description="N6-methyllysine; alternate" evidence="1">
    <location>
        <position position="19"/>
    </location>
</feature>
<feature type="modified residue" description="N6-acetyllysine; alternate" evidence="1">
    <location>
        <position position="24"/>
    </location>
</feature>
<feature type="modified residue" description="N6-methyllysine; alternate" evidence="1">
    <location>
        <position position="24"/>
    </location>
</feature>
<feature type="modified residue" description="N6,N6,N6-trimethyllysine; alternate" evidence="2">
    <location>
        <position position="28"/>
    </location>
</feature>
<feature type="modified residue" description="N6,N6-dimethyllysine; alternate" evidence="1">
    <location>
        <position position="28"/>
    </location>
</feature>
<feature type="modified residue" description="N6-methyllysine; alternate" evidence="1">
    <location>
        <position position="28"/>
    </location>
</feature>
<feature type="modified residue" description="Phosphoserine" evidence="1">
    <location>
        <position position="29"/>
    </location>
</feature>
<feature type="modified residue" description="N6,N6,N6-trimethyllysine; alternate" evidence="1">
    <location>
        <position position="37"/>
    </location>
</feature>
<feature type="modified residue" description="N6,N6-dimethyllysine; alternate" evidence="1">
    <location>
        <position position="37"/>
    </location>
</feature>
<feature type="modified residue" description="N6-methyllysine; alternate" evidence="1">
    <location>
        <position position="37"/>
    </location>
</feature>
<feature type="sequence conflict" description="In Ref. 2; AA sequence." evidence="8" ref="2">
    <original>K</original>
    <variation>Y</variation>
    <location>
        <position position="10"/>
    </location>
</feature>
<accession>P80553</accession>
<accession>A0A2H5AIY7</accession>
<organism>
    <name type="scientific">Narcissus pseudonarcissus</name>
    <name type="common">Daffodil</name>
    <dbReference type="NCBI Taxonomy" id="39639"/>
    <lineage>
        <taxon>Eukaryota</taxon>
        <taxon>Viridiplantae</taxon>
        <taxon>Streptophyta</taxon>
        <taxon>Embryophyta</taxon>
        <taxon>Tracheophyta</taxon>
        <taxon>Spermatophyta</taxon>
        <taxon>Magnoliopsida</taxon>
        <taxon>Liliopsida</taxon>
        <taxon>Asparagales</taxon>
        <taxon>Amaryllidaceae</taxon>
        <taxon>Amaryllidoideae</taxon>
        <taxon>Narcissus</taxon>
    </lineage>
</organism>
<dbReference type="EMBL" id="MF405170">
    <property type="protein sequence ID" value="AUG71931.1"/>
    <property type="molecule type" value="mRNA"/>
</dbReference>
<dbReference type="SMR" id="P80553"/>
<dbReference type="GO" id="GO:0005730">
    <property type="term" value="C:nucleolus"/>
    <property type="evidence" value="ECO:0007669"/>
    <property type="project" value="UniProtKB-SubCell"/>
</dbReference>
<dbReference type="GO" id="GO:0000786">
    <property type="term" value="C:nucleosome"/>
    <property type="evidence" value="ECO:0007669"/>
    <property type="project" value="UniProtKB-KW"/>
</dbReference>
<dbReference type="GO" id="GO:0003677">
    <property type="term" value="F:DNA binding"/>
    <property type="evidence" value="ECO:0007669"/>
    <property type="project" value="UniProtKB-KW"/>
</dbReference>
<dbReference type="GO" id="GO:0046982">
    <property type="term" value="F:protein heterodimerization activity"/>
    <property type="evidence" value="ECO:0007669"/>
    <property type="project" value="InterPro"/>
</dbReference>
<dbReference type="GO" id="GO:0030527">
    <property type="term" value="F:structural constituent of chromatin"/>
    <property type="evidence" value="ECO:0007669"/>
    <property type="project" value="InterPro"/>
</dbReference>
<dbReference type="CDD" id="cd22911">
    <property type="entry name" value="HFD_H3"/>
    <property type="match status" value="1"/>
</dbReference>
<dbReference type="FunFam" id="1.10.20.10:FF:000078">
    <property type="entry name" value="Histone H3"/>
    <property type="match status" value="1"/>
</dbReference>
<dbReference type="FunFam" id="1.10.20.10:FF:000044">
    <property type="entry name" value="Histone H3.3"/>
    <property type="match status" value="1"/>
</dbReference>
<dbReference type="Gene3D" id="1.10.20.10">
    <property type="entry name" value="Histone, subunit A"/>
    <property type="match status" value="1"/>
</dbReference>
<dbReference type="InterPro" id="IPR009072">
    <property type="entry name" value="Histone-fold"/>
</dbReference>
<dbReference type="InterPro" id="IPR007125">
    <property type="entry name" value="Histone_H2A/H2B/H3"/>
</dbReference>
<dbReference type="InterPro" id="IPR000164">
    <property type="entry name" value="Histone_H3/CENP-A"/>
</dbReference>
<dbReference type="PANTHER" id="PTHR11426">
    <property type="entry name" value="HISTONE H3"/>
    <property type="match status" value="1"/>
</dbReference>
<dbReference type="Pfam" id="PF00125">
    <property type="entry name" value="Histone"/>
    <property type="match status" value="1"/>
</dbReference>
<dbReference type="PRINTS" id="PR00622">
    <property type="entry name" value="HISTONEH3"/>
</dbReference>
<dbReference type="SMART" id="SM00428">
    <property type="entry name" value="H3"/>
    <property type="match status" value="1"/>
</dbReference>
<dbReference type="SUPFAM" id="SSF47113">
    <property type="entry name" value="Histone-fold"/>
    <property type="match status" value="1"/>
</dbReference>
<dbReference type="PROSITE" id="PS00322">
    <property type="entry name" value="HISTONE_H3_1"/>
    <property type="match status" value="1"/>
</dbReference>
<dbReference type="PROSITE" id="PS00959">
    <property type="entry name" value="HISTONE_H3_2"/>
    <property type="match status" value="1"/>
</dbReference>